<accession>P0DXX4</accession>
<proteinExistence type="evidence at protein level"/>
<gene>
    <name evidence="4" type="primary">tacA2</name>
</gene>
<sequence>MPAANSMAMKRETLNLRIKPAERDLIDRAAKARGKNRTDFVLEAARAAAEEALIEQRIIMADPEAYQEFLVRLDQTPSPNAALRKTMQTPAPWEQEK</sequence>
<dbReference type="RefSeq" id="WP_001110452.1">
    <property type="nucleotide sequence ID" value="NZ_WIDC01000200.1"/>
</dbReference>
<dbReference type="SMR" id="P0DXX4"/>
<dbReference type="GO" id="GO:0003677">
    <property type="term" value="F:DNA binding"/>
    <property type="evidence" value="ECO:0007669"/>
    <property type="project" value="UniProtKB-KW"/>
</dbReference>
<dbReference type="GO" id="GO:0006355">
    <property type="term" value="P:regulation of DNA-templated transcription"/>
    <property type="evidence" value="ECO:0007669"/>
    <property type="project" value="InterPro"/>
</dbReference>
<dbReference type="Gene3D" id="1.20.5.780">
    <property type="entry name" value="Single helix bin"/>
    <property type="match status" value="1"/>
</dbReference>
<dbReference type="InterPro" id="IPR010985">
    <property type="entry name" value="Ribbon_hlx_hlx"/>
</dbReference>
<dbReference type="InterPro" id="IPR014795">
    <property type="entry name" value="TacA_1-like"/>
</dbReference>
<dbReference type="PANTHER" id="PTHR35401">
    <property type="entry name" value="COPG FAMILY HELIX-TURN-HELIX PROTEIN-RELATED-RELATED"/>
    <property type="match status" value="1"/>
</dbReference>
<dbReference type="PANTHER" id="PTHR35401:SF1">
    <property type="entry name" value="CYTOPLASMIC PROTEIN"/>
    <property type="match status" value="1"/>
</dbReference>
<dbReference type="Pfam" id="PF08681">
    <property type="entry name" value="TacA1"/>
    <property type="match status" value="1"/>
</dbReference>
<dbReference type="SUPFAM" id="SSF47598">
    <property type="entry name" value="Ribbon-helix-helix"/>
    <property type="match status" value="1"/>
</dbReference>
<protein>
    <recommendedName>
        <fullName evidence="4">Antitoxin TacA2</fullName>
    </recommendedName>
</protein>
<evidence type="ECO:0000250" key="1">
    <source>
        <dbReference type="UniProtKB" id="A0A0F6B5X3"/>
    </source>
</evidence>
<evidence type="ECO:0000250" key="2">
    <source>
        <dbReference type="UniProtKB" id="A0A0F6BAH8"/>
    </source>
</evidence>
<evidence type="ECO:0000269" key="3">
    <source>
    </source>
</evidence>
<evidence type="ECO:0000303" key="4">
    <source>
    </source>
</evidence>
<evidence type="ECO:0000305" key="5"/>
<keyword id="KW-0238">DNA-binding</keyword>
<keyword id="KW-0678">Repressor</keyword>
<keyword id="KW-1277">Toxin-antitoxin system</keyword>
<keyword id="KW-0804">Transcription</keyword>
<keyword id="KW-0805">Transcription regulation</keyword>
<comment type="function">
    <text evidence="3">Antitoxin component of a type II toxin-antitoxin (TA) system. Counteracts the toxic effect of cognate toxin TacT2.</text>
</comment>
<comment type="function">
    <text evidence="1">The TacA2-TacT2 complex both represses and derepresses expression of its own operon.</text>
</comment>
<comment type="subunit">
    <text evidence="2 3">Homodimer (By similarity). Forms a complex with cognate toxin TacT2.</text>
</comment>
<comment type="miscellaneous">
    <text evidence="4">There are 3 TacA-TacT systems in this strain.</text>
</comment>
<comment type="similarity">
    <text evidence="5">Belongs to the TacA antitoxin family.</text>
</comment>
<reference key="1">
    <citation type="journal article" date="2018" name="Nat. Commun.">
        <title>Activity of acetyltransferase toxins involved in Salmonella persister formation during macrophage infection.</title>
        <authorList>
            <person name="Rycroft J.A."/>
            <person name="Gollan B."/>
            <person name="Grabe G.J."/>
            <person name="Hall A."/>
            <person name="Cheverton A.M."/>
            <person name="Larrouy-Maumus G."/>
            <person name="Hare S.A."/>
            <person name="Helaine S."/>
        </authorList>
    </citation>
    <scope>NUCLEOTIDE SEQUENCE [GENOMIC DNA]</scope>
    <scope>FUNCTION AS AN ANTITOXIN</scope>
    <scope>SUBUNIT</scope>
    <source>
        <strain>NCTC 13349</strain>
    </source>
</reference>
<feature type="chain" id="PRO_0000461694" description="Antitoxin TacA2">
    <location>
        <begin position="1"/>
        <end position="97"/>
    </location>
</feature>
<organism>
    <name type="scientific">Salmonella enteritidis</name>
    <dbReference type="NCBI Taxonomy" id="149539"/>
    <lineage>
        <taxon>Bacteria</taxon>
        <taxon>Pseudomonadati</taxon>
        <taxon>Pseudomonadota</taxon>
        <taxon>Gammaproteobacteria</taxon>
        <taxon>Enterobacterales</taxon>
        <taxon>Enterobacteriaceae</taxon>
        <taxon>Salmonella</taxon>
    </lineage>
</organism>
<name>TACA2_SALEN</name>